<comment type="function">
    <text evidence="1">Could be a nuclease involved in processing of the 5'-end of pre-16S rRNA.</text>
</comment>
<comment type="subcellular location">
    <subcellularLocation>
        <location evidence="1">Cytoplasm</location>
    </subcellularLocation>
</comment>
<comment type="similarity">
    <text evidence="1">Belongs to the YqgF nuclease family.</text>
</comment>
<gene>
    <name type="ordered locus">Mkms_2394</name>
</gene>
<sequence>MTDSDHRLPDRPGEGDPGRGRRIGIDVGSVRVGVATSDPDGVLATPVETVRREKSSDRHVRRLAQLVTELEAVEVVVGLPRTLADRTGPAAHDAIDVAEALARRIAPVPVRMADERLTTVSAQRSLREAGVRAKGQRAMIDQVAAVGILQSWLDQRRAALAAPGEGGHG</sequence>
<reference key="1">
    <citation type="submission" date="2006-12" db="EMBL/GenBank/DDBJ databases">
        <title>Complete sequence of chromosome of Mycobacterium sp. KMS.</title>
        <authorList>
            <consortium name="US DOE Joint Genome Institute"/>
            <person name="Copeland A."/>
            <person name="Lucas S."/>
            <person name="Lapidus A."/>
            <person name="Barry K."/>
            <person name="Detter J.C."/>
            <person name="Glavina del Rio T."/>
            <person name="Hammon N."/>
            <person name="Israni S."/>
            <person name="Dalin E."/>
            <person name="Tice H."/>
            <person name="Pitluck S."/>
            <person name="Kiss H."/>
            <person name="Brettin T."/>
            <person name="Bruce D."/>
            <person name="Han C."/>
            <person name="Tapia R."/>
            <person name="Gilna P."/>
            <person name="Schmutz J."/>
            <person name="Larimer F."/>
            <person name="Land M."/>
            <person name="Hauser L."/>
            <person name="Kyrpides N."/>
            <person name="Mikhailova N."/>
            <person name="Miller C.D."/>
            <person name="Richardson P."/>
        </authorList>
    </citation>
    <scope>NUCLEOTIDE SEQUENCE [LARGE SCALE GENOMIC DNA]</scope>
    <source>
        <strain>KMS</strain>
    </source>
</reference>
<proteinExistence type="inferred from homology"/>
<protein>
    <recommendedName>
        <fullName evidence="1">Putative pre-16S rRNA nuclease</fullName>
        <ecNumber evidence="1">3.1.-.-</ecNumber>
    </recommendedName>
</protein>
<organism>
    <name type="scientific">Mycobacterium sp. (strain KMS)</name>
    <dbReference type="NCBI Taxonomy" id="189918"/>
    <lineage>
        <taxon>Bacteria</taxon>
        <taxon>Bacillati</taxon>
        <taxon>Actinomycetota</taxon>
        <taxon>Actinomycetes</taxon>
        <taxon>Mycobacteriales</taxon>
        <taxon>Mycobacteriaceae</taxon>
        <taxon>Mycobacterium</taxon>
    </lineage>
</organism>
<name>YQGF_MYCSK</name>
<feature type="chain" id="PRO_1000061538" description="Putative pre-16S rRNA nuclease">
    <location>
        <begin position="1"/>
        <end position="169"/>
    </location>
</feature>
<feature type="region of interest" description="Disordered" evidence="2">
    <location>
        <begin position="1"/>
        <end position="24"/>
    </location>
</feature>
<feature type="compositionally biased region" description="Basic and acidic residues" evidence="2">
    <location>
        <begin position="1"/>
        <end position="19"/>
    </location>
</feature>
<keyword id="KW-0963">Cytoplasm</keyword>
<keyword id="KW-0378">Hydrolase</keyword>
<keyword id="KW-0540">Nuclease</keyword>
<keyword id="KW-0690">Ribosome biogenesis</keyword>
<accession>A1UFI4</accession>
<evidence type="ECO:0000255" key="1">
    <source>
        <dbReference type="HAMAP-Rule" id="MF_00651"/>
    </source>
</evidence>
<evidence type="ECO:0000256" key="2">
    <source>
        <dbReference type="SAM" id="MobiDB-lite"/>
    </source>
</evidence>
<dbReference type="EC" id="3.1.-.-" evidence="1"/>
<dbReference type="EMBL" id="CP000518">
    <property type="protein sequence ID" value="ABL91592.1"/>
    <property type="molecule type" value="Genomic_DNA"/>
</dbReference>
<dbReference type="SMR" id="A1UFI4"/>
<dbReference type="STRING" id="189918.Mkms_2394"/>
<dbReference type="KEGG" id="mkm:Mkms_2394"/>
<dbReference type="HOGENOM" id="CLU_098240_0_1_11"/>
<dbReference type="OrthoDB" id="9790539at2"/>
<dbReference type="GO" id="GO:0005829">
    <property type="term" value="C:cytosol"/>
    <property type="evidence" value="ECO:0007669"/>
    <property type="project" value="TreeGrafter"/>
</dbReference>
<dbReference type="GO" id="GO:0004518">
    <property type="term" value="F:nuclease activity"/>
    <property type="evidence" value="ECO:0007669"/>
    <property type="project" value="UniProtKB-KW"/>
</dbReference>
<dbReference type="GO" id="GO:0000967">
    <property type="term" value="P:rRNA 5'-end processing"/>
    <property type="evidence" value="ECO:0007669"/>
    <property type="project" value="UniProtKB-UniRule"/>
</dbReference>
<dbReference type="CDD" id="cd16964">
    <property type="entry name" value="YqgF"/>
    <property type="match status" value="1"/>
</dbReference>
<dbReference type="FunFam" id="3.30.420.140:FF:000005">
    <property type="entry name" value="Putative pre-16S rRNA nuclease"/>
    <property type="match status" value="1"/>
</dbReference>
<dbReference type="Gene3D" id="3.30.420.140">
    <property type="entry name" value="YqgF/RNase H-like domain"/>
    <property type="match status" value="1"/>
</dbReference>
<dbReference type="HAMAP" id="MF_00651">
    <property type="entry name" value="Nuclease_YqgF"/>
    <property type="match status" value="1"/>
</dbReference>
<dbReference type="InterPro" id="IPR012337">
    <property type="entry name" value="RNaseH-like_sf"/>
</dbReference>
<dbReference type="InterPro" id="IPR005227">
    <property type="entry name" value="YqgF"/>
</dbReference>
<dbReference type="InterPro" id="IPR006641">
    <property type="entry name" value="YqgF/RNaseH-like_dom"/>
</dbReference>
<dbReference type="InterPro" id="IPR037027">
    <property type="entry name" value="YqgF/RNaseH-like_dom_sf"/>
</dbReference>
<dbReference type="NCBIfam" id="TIGR00250">
    <property type="entry name" value="RNAse_H_YqgF"/>
    <property type="match status" value="1"/>
</dbReference>
<dbReference type="PANTHER" id="PTHR33317">
    <property type="entry name" value="POLYNUCLEOTIDYL TRANSFERASE, RIBONUCLEASE H-LIKE SUPERFAMILY PROTEIN"/>
    <property type="match status" value="1"/>
</dbReference>
<dbReference type="PANTHER" id="PTHR33317:SF4">
    <property type="entry name" value="POLYNUCLEOTIDYL TRANSFERASE, RIBONUCLEASE H-LIKE SUPERFAMILY PROTEIN"/>
    <property type="match status" value="1"/>
</dbReference>
<dbReference type="Pfam" id="PF03652">
    <property type="entry name" value="RuvX"/>
    <property type="match status" value="1"/>
</dbReference>
<dbReference type="SMART" id="SM00732">
    <property type="entry name" value="YqgFc"/>
    <property type="match status" value="1"/>
</dbReference>
<dbReference type="SUPFAM" id="SSF53098">
    <property type="entry name" value="Ribonuclease H-like"/>
    <property type="match status" value="1"/>
</dbReference>